<organism>
    <name type="scientific">Bacillus licheniformis (strain ATCC 14580 / DSM 13 / JCM 2505 / CCUG 7422 / NBRC 12200 / NCIMB 9375 / NCTC 10341 / NRRL NRS-1264 / Gibson 46)</name>
    <dbReference type="NCBI Taxonomy" id="279010"/>
    <lineage>
        <taxon>Bacteria</taxon>
        <taxon>Bacillati</taxon>
        <taxon>Bacillota</taxon>
        <taxon>Bacilli</taxon>
        <taxon>Bacillales</taxon>
        <taxon>Bacillaceae</taxon>
        <taxon>Bacillus</taxon>
    </lineage>
</organism>
<proteinExistence type="inferred from homology"/>
<accession>Q65FV8</accession>
<accession>Q62RB6</accession>
<evidence type="ECO:0000255" key="1">
    <source>
        <dbReference type="HAMAP-Rule" id="MF_00086"/>
    </source>
</evidence>
<dbReference type="EC" id="2.5.1.6" evidence="1"/>
<dbReference type="EMBL" id="AE017333">
    <property type="protein sequence ID" value="AAU42056.1"/>
    <property type="molecule type" value="Genomic_DNA"/>
</dbReference>
<dbReference type="EMBL" id="CP000002">
    <property type="protein sequence ID" value="AAU24694.1"/>
    <property type="molecule type" value="Genomic_DNA"/>
</dbReference>
<dbReference type="RefSeq" id="WP_003184586.1">
    <property type="nucleotide sequence ID" value="NC_006322.1"/>
</dbReference>
<dbReference type="SMR" id="Q65FV8"/>
<dbReference type="STRING" id="279010.BL02632"/>
<dbReference type="GeneID" id="92860214"/>
<dbReference type="KEGG" id="bld:BLi03196"/>
<dbReference type="KEGG" id="bli:BL02632"/>
<dbReference type="eggNOG" id="COG0192">
    <property type="taxonomic scope" value="Bacteria"/>
</dbReference>
<dbReference type="HOGENOM" id="CLU_041802_1_1_9"/>
<dbReference type="UniPathway" id="UPA00315">
    <property type="reaction ID" value="UER00080"/>
</dbReference>
<dbReference type="Proteomes" id="UP000000606">
    <property type="component" value="Chromosome"/>
</dbReference>
<dbReference type="GO" id="GO:0005737">
    <property type="term" value="C:cytoplasm"/>
    <property type="evidence" value="ECO:0007669"/>
    <property type="project" value="UniProtKB-SubCell"/>
</dbReference>
<dbReference type="GO" id="GO:0005524">
    <property type="term" value="F:ATP binding"/>
    <property type="evidence" value="ECO:0007669"/>
    <property type="project" value="UniProtKB-UniRule"/>
</dbReference>
<dbReference type="GO" id="GO:0000287">
    <property type="term" value="F:magnesium ion binding"/>
    <property type="evidence" value="ECO:0007669"/>
    <property type="project" value="UniProtKB-UniRule"/>
</dbReference>
<dbReference type="GO" id="GO:0004478">
    <property type="term" value="F:methionine adenosyltransferase activity"/>
    <property type="evidence" value="ECO:0007669"/>
    <property type="project" value="UniProtKB-UniRule"/>
</dbReference>
<dbReference type="GO" id="GO:0006730">
    <property type="term" value="P:one-carbon metabolic process"/>
    <property type="evidence" value="ECO:0007669"/>
    <property type="project" value="UniProtKB-KW"/>
</dbReference>
<dbReference type="GO" id="GO:0006556">
    <property type="term" value="P:S-adenosylmethionine biosynthetic process"/>
    <property type="evidence" value="ECO:0007669"/>
    <property type="project" value="UniProtKB-UniRule"/>
</dbReference>
<dbReference type="CDD" id="cd18079">
    <property type="entry name" value="S-AdoMet_synt"/>
    <property type="match status" value="1"/>
</dbReference>
<dbReference type="FunFam" id="3.30.300.10:FF:000003">
    <property type="entry name" value="S-adenosylmethionine synthase"/>
    <property type="match status" value="1"/>
</dbReference>
<dbReference type="FunFam" id="3.30.300.10:FF:000004">
    <property type="entry name" value="S-adenosylmethionine synthase"/>
    <property type="match status" value="1"/>
</dbReference>
<dbReference type="Gene3D" id="3.30.300.10">
    <property type="match status" value="3"/>
</dbReference>
<dbReference type="HAMAP" id="MF_00086">
    <property type="entry name" value="S_AdoMet_synth1"/>
    <property type="match status" value="1"/>
</dbReference>
<dbReference type="InterPro" id="IPR022631">
    <property type="entry name" value="ADOMET_SYNTHASE_CS"/>
</dbReference>
<dbReference type="InterPro" id="IPR022630">
    <property type="entry name" value="S-AdoMet_synt_C"/>
</dbReference>
<dbReference type="InterPro" id="IPR022629">
    <property type="entry name" value="S-AdoMet_synt_central"/>
</dbReference>
<dbReference type="InterPro" id="IPR022628">
    <property type="entry name" value="S-AdoMet_synt_N"/>
</dbReference>
<dbReference type="InterPro" id="IPR002133">
    <property type="entry name" value="S-AdoMet_synthetase"/>
</dbReference>
<dbReference type="InterPro" id="IPR022636">
    <property type="entry name" value="S-AdoMet_synthetase_sfam"/>
</dbReference>
<dbReference type="NCBIfam" id="TIGR01034">
    <property type="entry name" value="metK"/>
    <property type="match status" value="1"/>
</dbReference>
<dbReference type="PANTHER" id="PTHR11964">
    <property type="entry name" value="S-ADENOSYLMETHIONINE SYNTHETASE"/>
    <property type="match status" value="1"/>
</dbReference>
<dbReference type="Pfam" id="PF02773">
    <property type="entry name" value="S-AdoMet_synt_C"/>
    <property type="match status" value="1"/>
</dbReference>
<dbReference type="Pfam" id="PF02772">
    <property type="entry name" value="S-AdoMet_synt_M"/>
    <property type="match status" value="1"/>
</dbReference>
<dbReference type="Pfam" id="PF00438">
    <property type="entry name" value="S-AdoMet_synt_N"/>
    <property type="match status" value="1"/>
</dbReference>
<dbReference type="PIRSF" id="PIRSF000497">
    <property type="entry name" value="MAT"/>
    <property type="match status" value="1"/>
</dbReference>
<dbReference type="SUPFAM" id="SSF55973">
    <property type="entry name" value="S-adenosylmethionine synthetase"/>
    <property type="match status" value="3"/>
</dbReference>
<dbReference type="PROSITE" id="PS00376">
    <property type="entry name" value="ADOMET_SYNTHASE_1"/>
    <property type="match status" value="1"/>
</dbReference>
<dbReference type="PROSITE" id="PS00377">
    <property type="entry name" value="ADOMET_SYNTHASE_2"/>
    <property type="match status" value="1"/>
</dbReference>
<comment type="function">
    <text evidence="1">Catalyzes the formation of S-adenosylmethionine (AdoMet) from methionine and ATP. The overall synthetic reaction is composed of two sequential steps, AdoMet formation and the subsequent tripolyphosphate hydrolysis which occurs prior to release of AdoMet from the enzyme.</text>
</comment>
<comment type="catalytic activity">
    <reaction evidence="1">
        <text>L-methionine + ATP + H2O = S-adenosyl-L-methionine + phosphate + diphosphate</text>
        <dbReference type="Rhea" id="RHEA:21080"/>
        <dbReference type="ChEBI" id="CHEBI:15377"/>
        <dbReference type="ChEBI" id="CHEBI:30616"/>
        <dbReference type="ChEBI" id="CHEBI:33019"/>
        <dbReference type="ChEBI" id="CHEBI:43474"/>
        <dbReference type="ChEBI" id="CHEBI:57844"/>
        <dbReference type="ChEBI" id="CHEBI:59789"/>
        <dbReference type="EC" id="2.5.1.6"/>
    </reaction>
</comment>
<comment type="cofactor">
    <cofactor evidence="1">
        <name>Mg(2+)</name>
        <dbReference type="ChEBI" id="CHEBI:18420"/>
    </cofactor>
    <text evidence="1">Binds 2 divalent ions per subunit.</text>
</comment>
<comment type="cofactor">
    <cofactor evidence="1">
        <name>K(+)</name>
        <dbReference type="ChEBI" id="CHEBI:29103"/>
    </cofactor>
    <text evidence="1">Binds 1 potassium ion per subunit.</text>
</comment>
<comment type="pathway">
    <text evidence="1">Amino-acid biosynthesis; S-adenosyl-L-methionine biosynthesis; S-adenosyl-L-methionine from L-methionine: step 1/1.</text>
</comment>
<comment type="subunit">
    <text evidence="1">Homotetramer; dimer of dimers.</text>
</comment>
<comment type="subcellular location">
    <subcellularLocation>
        <location evidence="1">Cytoplasm</location>
    </subcellularLocation>
</comment>
<comment type="similarity">
    <text evidence="1">Belongs to the AdoMet synthase family.</text>
</comment>
<sequence length="400" mass="43888">MSKNRRLFTSESVTEGHPDKICDQISDSILDEILKKDPNARVACETSVTTGLVLVSGEITTSTYVDIPKTVRETIKEIGYTRAKYGFDAETCAVLTSIDEQSPDIAMGVDQALEAREGAMSDAEIEAIGAGDQGLMFGFACNETKELMPLPISLAHKLSRRLTEVRKEEILPYLRPDGKTQVTVEYDENNKPIRIDTIVISTQHHPEISLEQIQRNLKEHVINPVVPKELIDENTKYFINPTGRFVIGGPQGDAGLTGRKIIVDTYGGYARHGGGAFSGKDATKVDRSAAYAARYVAKNIVAAGLADSCEVQLAYAIGVAQPVSISIDTFGTGKASEETLIEVVRKNFDLRPAGIIKMLDLRRPIYKQTAAYGHFGRLDLDLPWERTDKADQLKKDALGE</sequence>
<keyword id="KW-0067">ATP-binding</keyword>
<keyword id="KW-0963">Cytoplasm</keyword>
<keyword id="KW-0460">Magnesium</keyword>
<keyword id="KW-0479">Metal-binding</keyword>
<keyword id="KW-0547">Nucleotide-binding</keyword>
<keyword id="KW-0554">One-carbon metabolism</keyword>
<keyword id="KW-0630">Potassium</keyword>
<keyword id="KW-1185">Reference proteome</keyword>
<keyword id="KW-0808">Transferase</keyword>
<gene>
    <name evidence="1" type="primary">metK</name>
    <name type="ordered locus">BLi03196</name>
    <name type="ordered locus">BL02632</name>
</gene>
<reference key="1">
    <citation type="journal article" date="2004" name="J. Mol. Microbiol. Biotechnol.">
        <title>The complete genome sequence of Bacillus licheniformis DSM13, an organism with great industrial potential.</title>
        <authorList>
            <person name="Veith B."/>
            <person name="Herzberg C."/>
            <person name="Steckel S."/>
            <person name="Feesche J."/>
            <person name="Maurer K.H."/>
            <person name="Ehrenreich P."/>
            <person name="Baeumer S."/>
            <person name="Henne A."/>
            <person name="Liesegang H."/>
            <person name="Merkl R."/>
            <person name="Ehrenreich A."/>
            <person name="Gottschalk G."/>
        </authorList>
    </citation>
    <scope>NUCLEOTIDE SEQUENCE [LARGE SCALE GENOMIC DNA]</scope>
    <source>
        <strain>ATCC 14580 / DSM 13 / JCM 2505 / CCUG 7422 / NBRC 12200 / NCIMB 9375 / NCTC 10341 / NRRL NRS-1264 / Gibson 46</strain>
    </source>
</reference>
<reference key="2">
    <citation type="journal article" date="2004" name="Genome Biol.">
        <title>Complete genome sequence of the industrial bacterium Bacillus licheniformis and comparisons with closely related Bacillus species.</title>
        <authorList>
            <person name="Rey M.W."/>
            <person name="Ramaiya P."/>
            <person name="Nelson B.A."/>
            <person name="Brody-Karpin S.D."/>
            <person name="Zaretsky E.J."/>
            <person name="Tang M."/>
            <person name="Lopez de Leon A."/>
            <person name="Xiang H."/>
            <person name="Gusti V."/>
            <person name="Clausen I.G."/>
            <person name="Olsen P.B."/>
            <person name="Rasmussen M.D."/>
            <person name="Andersen J.T."/>
            <person name="Joergensen P.L."/>
            <person name="Larsen T.S."/>
            <person name="Sorokin A."/>
            <person name="Bolotin A."/>
            <person name="Lapidus A."/>
            <person name="Galleron N."/>
            <person name="Ehrlich S.D."/>
            <person name="Berka R.M."/>
        </authorList>
    </citation>
    <scope>NUCLEOTIDE SEQUENCE [LARGE SCALE GENOMIC DNA]</scope>
    <source>
        <strain>ATCC 14580 / DSM 13 / JCM 2505 / CCUG 7422 / NBRC 12200 / NCIMB 9375 / NCTC 10341 / NRRL NRS-1264 / Gibson 46</strain>
    </source>
</reference>
<feature type="chain" id="PRO_0000174490" description="S-adenosylmethionine synthase">
    <location>
        <begin position="1"/>
        <end position="400"/>
    </location>
</feature>
<feature type="region of interest" description="Flexible loop" evidence="1">
    <location>
        <begin position="101"/>
        <end position="111"/>
    </location>
</feature>
<feature type="binding site" description="in other chain" evidence="1">
    <location>
        <position position="17"/>
    </location>
    <ligand>
        <name>ATP</name>
        <dbReference type="ChEBI" id="CHEBI:30616"/>
        <note>ligand shared between two neighboring subunits</note>
    </ligand>
</feature>
<feature type="binding site" evidence="1">
    <location>
        <position position="19"/>
    </location>
    <ligand>
        <name>Mg(2+)</name>
        <dbReference type="ChEBI" id="CHEBI:18420"/>
    </ligand>
</feature>
<feature type="binding site" evidence="1">
    <location>
        <position position="45"/>
    </location>
    <ligand>
        <name>K(+)</name>
        <dbReference type="ChEBI" id="CHEBI:29103"/>
    </ligand>
</feature>
<feature type="binding site" description="in other chain" evidence="1">
    <location>
        <position position="58"/>
    </location>
    <ligand>
        <name>L-methionine</name>
        <dbReference type="ChEBI" id="CHEBI:57844"/>
        <note>ligand shared between two neighboring subunits</note>
    </ligand>
</feature>
<feature type="binding site" description="in other chain" evidence="1">
    <location>
        <position position="101"/>
    </location>
    <ligand>
        <name>L-methionine</name>
        <dbReference type="ChEBI" id="CHEBI:57844"/>
        <note>ligand shared between two neighboring subunits</note>
    </ligand>
</feature>
<feature type="binding site" description="in other chain" evidence="1">
    <location>
        <begin position="177"/>
        <end position="179"/>
    </location>
    <ligand>
        <name>ATP</name>
        <dbReference type="ChEBI" id="CHEBI:30616"/>
        <note>ligand shared between two neighboring subunits</note>
    </ligand>
</feature>
<feature type="binding site" description="in other chain" evidence="1">
    <location>
        <begin position="244"/>
        <end position="245"/>
    </location>
    <ligand>
        <name>ATP</name>
        <dbReference type="ChEBI" id="CHEBI:30616"/>
        <note>ligand shared between two neighboring subunits</note>
    </ligand>
</feature>
<feature type="binding site" evidence="1">
    <location>
        <position position="253"/>
    </location>
    <ligand>
        <name>ATP</name>
        <dbReference type="ChEBI" id="CHEBI:30616"/>
        <note>ligand shared between two neighboring subunits</note>
    </ligand>
</feature>
<feature type="binding site" evidence="1">
    <location>
        <position position="253"/>
    </location>
    <ligand>
        <name>L-methionine</name>
        <dbReference type="ChEBI" id="CHEBI:57844"/>
        <note>ligand shared between two neighboring subunits</note>
    </ligand>
</feature>
<feature type="binding site" description="in other chain" evidence="1">
    <location>
        <begin position="259"/>
        <end position="260"/>
    </location>
    <ligand>
        <name>ATP</name>
        <dbReference type="ChEBI" id="CHEBI:30616"/>
        <note>ligand shared between two neighboring subunits</note>
    </ligand>
</feature>
<feature type="binding site" evidence="1">
    <location>
        <position position="276"/>
    </location>
    <ligand>
        <name>ATP</name>
        <dbReference type="ChEBI" id="CHEBI:30616"/>
        <note>ligand shared between two neighboring subunits</note>
    </ligand>
</feature>
<feature type="binding site" evidence="1">
    <location>
        <position position="280"/>
    </location>
    <ligand>
        <name>ATP</name>
        <dbReference type="ChEBI" id="CHEBI:30616"/>
        <note>ligand shared between two neighboring subunits</note>
    </ligand>
</feature>
<feature type="binding site" description="in other chain" evidence="1">
    <location>
        <position position="284"/>
    </location>
    <ligand>
        <name>L-methionine</name>
        <dbReference type="ChEBI" id="CHEBI:57844"/>
        <note>ligand shared between two neighboring subunits</note>
    </ligand>
</feature>
<protein>
    <recommendedName>
        <fullName evidence="1">S-adenosylmethionine synthase</fullName>
        <shortName evidence="1">AdoMet synthase</shortName>
        <ecNumber evidence="1">2.5.1.6</ecNumber>
    </recommendedName>
    <alternativeName>
        <fullName evidence="1">MAT</fullName>
    </alternativeName>
    <alternativeName>
        <fullName evidence="1">Methionine adenosyltransferase</fullName>
    </alternativeName>
</protein>
<name>METK_BACLD</name>